<protein>
    <recommendedName>
        <fullName evidence="1">Chorismate synthase</fullName>
        <shortName evidence="1">CS</shortName>
        <ecNumber evidence="1">4.2.3.5</ecNumber>
    </recommendedName>
    <alternativeName>
        <fullName evidence="1">5-enolpyruvylshikimate-3-phosphate phospholyase</fullName>
    </alternativeName>
</protein>
<gene>
    <name evidence="1" type="primary">aroC</name>
    <name type="ordered locus">BAB1_0454</name>
</gene>
<name>AROC_BRUA2</name>
<feature type="chain" id="PRO_0000256275" description="Chorismate synthase">
    <location>
        <begin position="1"/>
        <end position="364"/>
    </location>
</feature>
<feature type="binding site" evidence="1">
    <location>
        <position position="48"/>
    </location>
    <ligand>
        <name>NADP(+)</name>
        <dbReference type="ChEBI" id="CHEBI:58349"/>
    </ligand>
</feature>
<feature type="binding site" evidence="1">
    <location>
        <begin position="131"/>
        <end position="133"/>
    </location>
    <ligand>
        <name>FMN</name>
        <dbReference type="ChEBI" id="CHEBI:58210"/>
    </ligand>
</feature>
<feature type="binding site" evidence="1">
    <location>
        <begin position="243"/>
        <end position="244"/>
    </location>
    <ligand>
        <name>FMN</name>
        <dbReference type="ChEBI" id="CHEBI:58210"/>
    </ligand>
</feature>
<feature type="binding site" evidence="1">
    <location>
        <position position="288"/>
    </location>
    <ligand>
        <name>FMN</name>
        <dbReference type="ChEBI" id="CHEBI:58210"/>
    </ligand>
</feature>
<feature type="binding site" evidence="1">
    <location>
        <begin position="303"/>
        <end position="307"/>
    </location>
    <ligand>
        <name>FMN</name>
        <dbReference type="ChEBI" id="CHEBI:58210"/>
    </ligand>
</feature>
<feature type="binding site" evidence="1">
    <location>
        <position position="329"/>
    </location>
    <ligand>
        <name>FMN</name>
        <dbReference type="ChEBI" id="CHEBI:58210"/>
    </ligand>
</feature>
<reference key="1">
    <citation type="journal article" date="2005" name="Infect. Immun.">
        <title>Whole-genome analyses of speciation events in pathogenic Brucellae.</title>
        <authorList>
            <person name="Chain P.S."/>
            <person name="Comerci D.J."/>
            <person name="Tolmasky M.E."/>
            <person name="Larimer F.W."/>
            <person name="Malfatti S.A."/>
            <person name="Vergez L.M."/>
            <person name="Aguero F."/>
            <person name="Land M.L."/>
            <person name="Ugalde R.A."/>
            <person name="Garcia E."/>
        </authorList>
    </citation>
    <scope>NUCLEOTIDE SEQUENCE [LARGE SCALE GENOMIC DNA]</scope>
    <source>
        <strain>2308</strain>
    </source>
</reference>
<organism>
    <name type="scientific">Brucella abortus (strain 2308)</name>
    <dbReference type="NCBI Taxonomy" id="359391"/>
    <lineage>
        <taxon>Bacteria</taxon>
        <taxon>Pseudomonadati</taxon>
        <taxon>Pseudomonadota</taxon>
        <taxon>Alphaproteobacteria</taxon>
        <taxon>Hyphomicrobiales</taxon>
        <taxon>Brucellaceae</taxon>
        <taxon>Brucella/Ochrobactrum group</taxon>
        <taxon>Brucella</taxon>
    </lineage>
</organism>
<keyword id="KW-0028">Amino-acid biosynthesis</keyword>
<keyword id="KW-0057">Aromatic amino acid biosynthesis</keyword>
<keyword id="KW-0274">FAD</keyword>
<keyword id="KW-0285">Flavoprotein</keyword>
<keyword id="KW-0288">FMN</keyword>
<keyword id="KW-0456">Lyase</keyword>
<keyword id="KW-0521">NADP</keyword>
<keyword id="KW-1185">Reference proteome</keyword>
<sequence>MSHNSFGHLFRVTTWGESHGLALGCVVDGCPPGITFTEAEIQSFLDKRKPGQSKYTTQRREPDQVRVLSGVLLGEDGVTMTTTGTPISMMIENTDQRSKDYGEIARQYRPGHADYAYDVKYGIRDYRGGGRSSARETAARVAAGAIARKVVPGLEVRGALVSIGAHDIDRSRWNWAEVDNNPFFTPDAGSVEVFADYLDGIRKNGSSVGAIIEIVAEGVPAGIGAPIYGKLDQDIASYLMSINAVKGVEIGNGFEAARLTGEENADEMRMGNDGKPIFLSNHAGGVLGGIATGAPVVARFAVKPTSSILTPRRSIDKDGNEVDVMTRGRHDPCVGIRAVPIGEAMVACAIADHYLRHRGQTGRV</sequence>
<proteinExistence type="inferred from homology"/>
<accession>Q2YMF8</accession>
<evidence type="ECO:0000255" key="1">
    <source>
        <dbReference type="HAMAP-Rule" id="MF_00300"/>
    </source>
</evidence>
<comment type="function">
    <text evidence="1">Catalyzes the anti-1,4-elimination of the C-3 phosphate and the C-6 proR hydrogen from 5-enolpyruvylshikimate-3-phosphate (EPSP) to yield chorismate, which is the branch point compound that serves as the starting substrate for the three terminal pathways of aromatic amino acid biosynthesis. This reaction introduces a second double bond into the aromatic ring system.</text>
</comment>
<comment type="catalytic activity">
    <reaction evidence="1">
        <text>5-O-(1-carboxyvinyl)-3-phosphoshikimate = chorismate + phosphate</text>
        <dbReference type="Rhea" id="RHEA:21020"/>
        <dbReference type="ChEBI" id="CHEBI:29748"/>
        <dbReference type="ChEBI" id="CHEBI:43474"/>
        <dbReference type="ChEBI" id="CHEBI:57701"/>
        <dbReference type="EC" id="4.2.3.5"/>
    </reaction>
</comment>
<comment type="cofactor">
    <cofactor evidence="1">
        <name>FMNH2</name>
        <dbReference type="ChEBI" id="CHEBI:57618"/>
    </cofactor>
    <text evidence="1">Reduced FMN (FMNH(2)).</text>
</comment>
<comment type="pathway">
    <text evidence="1">Metabolic intermediate biosynthesis; chorismate biosynthesis; chorismate from D-erythrose 4-phosphate and phosphoenolpyruvate: step 7/7.</text>
</comment>
<comment type="subunit">
    <text evidence="1">Homotetramer.</text>
</comment>
<comment type="similarity">
    <text evidence="1">Belongs to the chorismate synthase family.</text>
</comment>
<dbReference type="EC" id="4.2.3.5" evidence="1"/>
<dbReference type="EMBL" id="AM040264">
    <property type="protein sequence ID" value="CAJ10410.1"/>
    <property type="molecule type" value="Genomic_DNA"/>
</dbReference>
<dbReference type="RefSeq" id="WP_002963585.1">
    <property type="nucleotide sequence ID" value="NZ_KN046823.1"/>
</dbReference>
<dbReference type="SMR" id="Q2YMF8"/>
<dbReference type="STRING" id="359391.BAB1_0454"/>
<dbReference type="GeneID" id="97534201"/>
<dbReference type="KEGG" id="bmf:BAB1_0454"/>
<dbReference type="PATRIC" id="fig|359391.11.peg.2494"/>
<dbReference type="HOGENOM" id="CLU_034547_0_0_5"/>
<dbReference type="PhylomeDB" id="Q2YMF8"/>
<dbReference type="UniPathway" id="UPA00053">
    <property type="reaction ID" value="UER00090"/>
</dbReference>
<dbReference type="PRO" id="PR:Q2YMF8"/>
<dbReference type="Proteomes" id="UP000002719">
    <property type="component" value="Chromosome I"/>
</dbReference>
<dbReference type="GO" id="GO:0005829">
    <property type="term" value="C:cytosol"/>
    <property type="evidence" value="ECO:0007669"/>
    <property type="project" value="TreeGrafter"/>
</dbReference>
<dbReference type="GO" id="GO:0004107">
    <property type="term" value="F:chorismate synthase activity"/>
    <property type="evidence" value="ECO:0007669"/>
    <property type="project" value="UniProtKB-UniRule"/>
</dbReference>
<dbReference type="GO" id="GO:0010181">
    <property type="term" value="F:FMN binding"/>
    <property type="evidence" value="ECO:0007669"/>
    <property type="project" value="TreeGrafter"/>
</dbReference>
<dbReference type="GO" id="GO:0008652">
    <property type="term" value="P:amino acid biosynthetic process"/>
    <property type="evidence" value="ECO:0007669"/>
    <property type="project" value="UniProtKB-KW"/>
</dbReference>
<dbReference type="GO" id="GO:0009073">
    <property type="term" value="P:aromatic amino acid family biosynthetic process"/>
    <property type="evidence" value="ECO:0007669"/>
    <property type="project" value="UniProtKB-KW"/>
</dbReference>
<dbReference type="GO" id="GO:0009423">
    <property type="term" value="P:chorismate biosynthetic process"/>
    <property type="evidence" value="ECO:0007669"/>
    <property type="project" value="UniProtKB-UniRule"/>
</dbReference>
<dbReference type="CDD" id="cd07304">
    <property type="entry name" value="Chorismate_synthase"/>
    <property type="match status" value="1"/>
</dbReference>
<dbReference type="Gene3D" id="3.60.150.10">
    <property type="entry name" value="Chorismate synthase AroC"/>
    <property type="match status" value="1"/>
</dbReference>
<dbReference type="HAMAP" id="MF_00300">
    <property type="entry name" value="Chorismate_synth"/>
    <property type="match status" value="1"/>
</dbReference>
<dbReference type="InterPro" id="IPR000453">
    <property type="entry name" value="Chorismate_synth"/>
</dbReference>
<dbReference type="InterPro" id="IPR035904">
    <property type="entry name" value="Chorismate_synth_AroC_sf"/>
</dbReference>
<dbReference type="InterPro" id="IPR020541">
    <property type="entry name" value="Chorismate_synthase_CS"/>
</dbReference>
<dbReference type="NCBIfam" id="TIGR00033">
    <property type="entry name" value="aroC"/>
    <property type="match status" value="1"/>
</dbReference>
<dbReference type="NCBIfam" id="NF003793">
    <property type="entry name" value="PRK05382.1"/>
    <property type="match status" value="1"/>
</dbReference>
<dbReference type="PANTHER" id="PTHR21085">
    <property type="entry name" value="CHORISMATE SYNTHASE"/>
    <property type="match status" value="1"/>
</dbReference>
<dbReference type="PANTHER" id="PTHR21085:SF0">
    <property type="entry name" value="CHORISMATE SYNTHASE"/>
    <property type="match status" value="1"/>
</dbReference>
<dbReference type="Pfam" id="PF01264">
    <property type="entry name" value="Chorismate_synt"/>
    <property type="match status" value="1"/>
</dbReference>
<dbReference type="PIRSF" id="PIRSF001456">
    <property type="entry name" value="Chorismate_synth"/>
    <property type="match status" value="1"/>
</dbReference>
<dbReference type="SUPFAM" id="SSF103263">
    <property type="entry name" value="Chorismate synthase, AroC"/>
    <property type="match status" value="1"/>
</dbReference>
<dbReference type="PROSITE" id="PS00787">
    <property type="entry name" value="CHORISMATE_SYNTHASE_1"/>
    <property type="match status" value="1"/>
</dbReference>
<dbReference type="PROSITE" id="PS00788">
    <property type="entry name" value="CHORISMATE_SYNTHASE_2"/>
    <property type="match status" value="1"/>
</dbReference>
<dbReference type="PROSITE" id="PS00789">
    <property type="entry name" value="CHORISMATE_SYNTHASE_3"/>
    <property type="match status" value="1"/>
</dbReference>